<dbReference type="EMBL" id="KF552098">
    <property type="protein sequence ID" value="AHB18726.1"/>
    <property type="molecule type" value="Genomic_DNA"/>
</dbReference>
<dbReference type="EMBL" id="KC778571">
    <property type="protein sequence ID" value="AGO98227.1"/>
    <property type="molecule type" value="Genomic_DNA"/>
</dbReference>
<dbReference type="EMBL" id="KC778572">
    <property type="protein sequence ID" value="AGO98228.1"/>
    <property type="molecule type" value="Genomic_DNA"/>
</dbReference>
<dbReference type="EMBL" id="KC778573">
    <property type="protein sequence ID" value="AGO98229.1"/>
    <property type="molecule type" value="Genomic_DNA"/>
</dbReference>
<dbReference type="EMBL" id="KF546300">
    <property type="protein sequence ID" value="AHX98324.1"/>
    <property type="molecule type" value="Genomic_DNA"/>
</dbReference>
<dbReference type="EMBL" id="KF546301">
    <property type="protein sequence ID" value="AHX98325.1"/>
    <property type="molecule type" value="Genomic_DNA"/>
</dbReference>
<dbReference type="EMBL" id="KF546302">
    <property type="protein sequence ID" value="AHX98326.1"/>
    <property type="molecule type" value="Genomic_DNA"/>
</dbReference>
<dbReference type="GO" id="GO:0090729">
    <property type="term" value="F:toxin activity"/>
    <property type="evidence" value="ECO:0007669"/>
    <property type="project" value="UniProtKB-KW"/>
</dbReference>
<dbReference type="InterPro" id="IPR027582">
    <property type="entry name" value="Amanitin/phalloidin"/>
</dbReference>
<dbReference type="NCBIfam" id="TIGR04309">
    <property type="entry name" value="amanitin"/>
    <property type="match status" value="1"/>
</dbReference>
<sequence>MSDINATRLPAWLVDCPCVGDDINRLLTRGEK</sequence>
<accession>A0A023IWI8</accession>
<accession>A0A023UAK0</accession>
<organism>
    <name type="scientific">Amanita pallidorosea</name>
    <dbReference type="NCBI Taxonomy" id="1324310"/>
    <lineage>
        <taxon>Eukaryota</taxon>
        <taxon>Fungi</taxon>
        <taxon>Dikarya</taxon>
        <taxon>Basidiomycota</taxon>
        <taxon>Agaricomycotina</taxon>
        <taxon>Agaricomycetes</taxon>
        <taxon>Agaricomycetidae</taxon>
        <taxon>Agaricales</taxon>
        <taxon>Pluteineae</taxon>
        <taxon>Amanitaceae</taxon>
        <taxon>Amanita</taxon>
    </lineage>
</organism>
<proteinExistence type="inferred from homology"/>
<name>PHAT_AMAPL</name>
<gene>
    <name evidence="4" type="primary">PHA</name>
</gene>
<comment type="function">
    <text evidence="6">Major toxin that belongs to the bicyclic heptapeptides called phallotoxins (PubMed:24613547). Although structurally related to amatoxins, phallotoxins have a different mode of action, which is the stabilization of F-actin (PubMed:24613547). Phallotoxins are poisonous when administered parenterally, but not orally because of poor absorption (PubMed:24613547).</text>
</comment>
<comment type="PTM">
    <text evidence="1">Processed by the macrocyclase-peptidase enzyme POPB to yield a toxic cyclic heptapeptide (By similarity). POPB first removes 10 residues from the N-terminus (By similarity). Conformational trapping of the remaining peptide forces the enzyme to release this intermediate rather than proceed to macrocyclization (By similarity). The enzyme rebinds the remaining peptide in a different conformation and catalyzes macrocyclization of the N-terminal 7 residues (By similarity).</text>
</comment>
<comment type="similarity">
    <text evidence="5">Belongs to the MSDIN fungal toxin family.</text>
</comment>
<protein>
    <recommendedName>
        <fullName evidence="4">Phallacidin proprotein</fullName>
    </recommendedName>
    <component>
        <recommendedName>
            <fullName evidence="4">Phallacidin</fullName>
        </recommendedName>
    </component>
</protein>
<reference key="1">
    <citation type="journal article" date="2014" name="Toxicon">
        <title>The molecular diversity of toxin gene families in lethal Amanita mushrooms.</title>
        <authorList>
            <person name="Li P."/>
            <person name="Deng W."/>
            <person name="Li T."/>
        </authorList>
    </citation>
    <scope>NUCLEOTIDE SEQUENCE [GENOMIC DNA]</scope>
    <scope>FUNCTION</scope>
</reference>
<feature type="propeptide" id="PRO_0000443626" evidence="2">
    <location>
        <begin position="1"/>
        <end position="10"/>
    </location>
</feature>
<feature type="peptide" id="PRO_0000443627" description="Phallacidin" evidence="2">
    <location>
        <begin position="11"/>
        <end position="17"/>
    </location>
</feature>
<feature type="propeptide" id="PRO_0000443628" evidence="2">
    <location>
        <begin position="18"/>
        <end position="32"/>
    </location>
</feature>
<feature type="cross-link" description="Cyclopeptide (Ala-Pro)" evidence="2">
    <location>
        <begin position="11"/>
        <end position="17"/>
    </location>
</feature>
<feature type="cross-link" description="2'-cysteinyl-6'-hydroxytryptophan sulfoxide (Trp-Cys)" evidence="3">
    <location>
        <begin position="12"/>
        <end position="16"/>
    </location>
</feature>
<evidence type="ECO:0000250" key="1">
    <source>
        <dbReference type="UniProtKB" id="A0A067SLB9"/>
    </source>
</evidence>
<evidence type="ECO:0000250" key="2">
    <source>
        <dbReference type="UniProtKB" id="A8W7M4"/>
    </source>
</evidence>
<evidence type="ECO:0000250" key="3">
    <source>
        <dbReference type="UniProtKB" id="P85421"/>
    </source>
</evidence>
<evidence type="ECO:0000303" key="4">
    <source>
    </source>
</evidence>
<evidence type="ECO:0000305" key="5"/>
<evidence type="ECO:0000305" key="6">
    <source>
    </source>
</evidence>
<keyword id="KW-0883">Thioether bond</keyword>
<keyword id="KW-0800">Toxin</keyword>